<reference key="1">
    <citation type="journal article" date="2005" name="Genome Res.">
        <title>Comparative and functional genomic analyses of the pathogenicity of phytopathogen Xanthomonas campestris pv. campestris.</title>
        <authorList>
            <person name="Qian W."/>
            <person name="Jia Y."/>
            <person name="Ren S.-X."/>
            <person name="He Y.-Q."/>
            <person name="Feng J.-X."/>
            <person name="Lu L.-F."/>
            <person name="Sun Q."/>
            <person name="Ying G."/>
            <person name="Tang D.-J."/>
            <person name="Tang H."/>
            <person name="Wu W."/>
            <person name="Hao P."/>
            <person name="Wang L."/>
            <person name="Jiang B.-L."/>
            <person name="Zeng S."/>
            <person name="Gu W.-Y."/>
            <person name="Lu G."/>
            <person name="Rong L."/>
            <person name="Tian Y."/>
            <person name="Yao Z."/>
            <person name="Fu G."/>
            <person name="Chen B."/>
            <person name="Fang R."/>
            <person name="Qiang B."/>
            <person name="Chen Z."/>
            <person name="Zhao G.-P."/>
            <person name="Tang J.-L."/>
            <person name="He C."/>
        </authorList>
    </citation>
    <scope>NUCLEOTIDE SEQUENCE [LARGE SCALE GENOMIC DNA]</scope>
    <source>
        <strain>8004</strain>
    </source>
</reference>
<name>LOLD_XANC8</name>
<evidence type="ECO:0000255" key="1">
    <source>
        <dbReference type="HAMAP-Rule" id="MF_01708"/>
    </source>
</evidence>
<evidence type="ECO:0000305" key="2"/>
<comment type="function">
    <text evidence="1">Part of the ABC transporter complex LolCDE involved in the translocation of mature outer membrane-directed lipoproteins, from the inner membrane to the periplasmic chaperone, LolA. Responsible for the formation of the LolA-lipoprotein complex in an ATP-dependent manner.</text>
</comment>
<comment type="subunit">
    <text evidence="1">The complex is composed of two ATP-binding proteins (LolD) and two transmembrane proteins (LolC and LolE).</text>
</comment>
<comment type="subcellular location">
    <subcellularLocation>
        <location evidence="1">Cell inner membrane</location>
        <topology evidence="1">Peripheral membrane protein</topology>
    </subcellularLocation>
</comment>
<comment type="similarity">
    <text evidence="1">Belongs to the ABC transporter superfamily. Lipoprotein translocase (TC 3.A.1.125) family.</text>
</comment>
<comment type="sequence caution" evidence="2">
    <conflict type="erroneous initiation">
        <sequence resource="EMBL-CDS" id="AAY49052"/>
    </conflict>
</comment>
<protein>
    <recommendedName>
        <fullName evidence="1">Lipoprotein-releasing system ATP-binding protein LolD</fullName>
        <ecNumber evidence="1">7.6.2.-</ecNumber>
    </recommendedName>
</protein>
<dbReference type="EC" id="7.6.2.-" evidence="1"/>
<dbReference type="EMBL" id="CP000050">
    <property type="protein sequence ID" value="AAY49052.1"/>
    <property type="status" value="ALT_INIT"/>
    <property type="molecule type" value="Genomic_DNA"/>
</dbReference>
<dbReference type="SMR" id="Q4UV71"/>
<dbReference type="KEGG" id="xcb:XC_1989"/>
<dbReference type="HOGENOM" id="CLU_000604_1_22_6"/>
<dbReference type="Proteomes" id="UP000000420">
    <property type="component" value="Chromosome"/>
</dbReference>
<dbReference type="GO" id="GO:0005886">
    <property type="term" value="C:plasma membrane"/>
    <property type="evidence" value="ECO:0007669"/>
    <property type="project" value="UniProtKB-SubCell"/>
</dbReference>
<dbReference type="GO" id="GO:0005524">
    <property type="term" value="F:ATP binding"/>
    <property type="evidence" value="ECO:0007669"/>
    <property type="project" value="UniProtKB-KW"/>
</dbReference>
<dbReference type="GO" id="GO:0016887">
    <property type="term" value="F:ATP hydrolysis activity"/>
    <property type="evidence" value="ECO:0007669"/>
    <property type="project" value="InterPro"/>
</dbReference>
<dbReference type="GO" id="GO:0022857">
    <property type="term" value="F:transmembrane transporter activity"/>
    <property type="evidence" value="ECO:0007669"/>
    <property type="project" value="TreeGrafter"/>
</dbReference>
<dbReference type="GO" id="GO:0044874">
    <property type="term" value="P:lipoprotein localization to outer membrane"/>
    <property type="evidence" value="ECO:0007669"/>
    <property type="project" value="TreeGrafter"/>
</dbReference>
<dbReference type="GO" id="GO:0089705">
    <property type="term" value="P:protein localization to outer membrane"/>
    <property type="evidence" value="ECO:0007669"/>
    <property type="project" value="TreeGrafter"/>
</dbReference>
<dbReference type="CDD" id="cd03255">
    <property type="entry name" value="ABC_MJ0796_LolCDE_FtsE"/>
    <property type="match status" value="1"/>
</dbReference>
<dbReference type="FunFam" id="3.40.50.300:FF:000230">
    <property type="entry name" value="Lipoprotein-releasing system ATP-binding protein LolD"/>
    <property type="match status" value="1"/>
</dbReference>
<dbReference type="Gene3D" id="3.40.50.300">
    <property type="entry name" value="P-loop containing nucleotide triphosphate hydrolases"/>
    <property type="match status" value="1"/>
</dbReference>
<dbReference type="InterPro" id="IPR003593">
    <property type="entry name" value="AAA+_ATPase"/>
</dbReference>
<dbReference type="InterPro" id="IPR003439">
    <property type="entry name" value="ABC_transporter-like_ATP-bd"/>
</dbReference>
<dbReference type="InterPro" id="IPR015854">
    <property type="entry name" value="ABC_transpr_LolD-like"/>
</dbReference>
<dbReference type="InterPro" id="IPR011924">
    <property type="entry name" value="LolD_lipo_ATP-bd"/>
</dbReference>
<dbReference type="InterPro" id="IPR017911">
    <property type="entry name" value="MacB-like_ATP-bd"/>
</dbReference>
<dbReference type="InterPro" id="IPR027417">
    <property type="entry name" value="P-loop_NTPase"/>
</dbReference>
<dbReference type="NCBIfam" id="TIGR02211">
    <property type="entry name" value="LolD_lipo_ex"/>
    <property type="match status" value="1"/>
</dbReference>
<dbReference type="PANTHER" id="PTHR24220">
    <property type="entry name" value="IMPORT ATP-BINDING PROTEIN"/>
    <property type="match status" value="1"/>
</dbReference>
<dbReference type="PANTHER" id="PTHR24220:SF689">
    <property type="entry name" value="LIPOPROTEIN-RELEASING SYSTEM ATP-BINDING PROTEIN LOLD"/>
    <property type="match status" value="1"/>
</dbReference>
<dbReference type="Pfam" id="PF00005">
    <property type="entry name" value="ABC_tran"/>
    <property type="match status" value="1"/>
</dbReference>
<dbReference type="SMART" id="SM00382">
    <property type="entry name" value="AAA"/>
    <property type="match status" value="1"/>
</dbReference>
<dbReference type="SUPFAM" id="SSF52540">
    <property type="entry name" value="P-loop containing nucleoside triphosphate hydrolases"/>
    <property type="match status" value="1"/>
</dbReference>
<dbReference type="PROSITE" id="PS50893">
    <property type="entry name" value="ABC_TRANSPORTER_2"/>
    <property type="match status" value="1"/>
</dbReference>
<dbReference type="PROSITE" id="PS51244">
    <property type="entry name" value="LOLD"/>
    <property type="match status" value="1"/>
</dbReference>
<proteinExistence type="inferred from homology"/>
<organism>
    <name type="scientific">Xanthomonas campestris pv. campestris (strain 8004)</name>
    <dbReference type="NCBI Taxonomy" id="314565"/>
    <lineage>
        <taxon>Bacteria</taxon>
        <taxon>Pseudomonadati</taxon>
        <taxon>Pseudomonadota</taxon>
        <taxon>Gammaproteobacteria</taxon>
        <taxon>Lysobacterales</taxon>
        <taxon>Lysobacteraceae</taxon>
        <taxon>Xanthomonas</taxon>
    </lineage>
</organism>
<accession>Q4UV71</accession>
<gene>
    <name evidence="1" type="primary">lolD</name>
    <name type="ordered locus">XC_1989</name>
</gene>
<feature type="chain" id="PRO_0000272165" description="Lipoprotein-releasing system ATP-binding protein LolD">
    <location>
        <begin position="1"/>
        <end position="239"/>
    </location>
</feature>
<feature type="domain" description="ABC transporter" evidence="1">
    <location>
        <begin position="14"/>
        <end position="239"/>
    </location>
</feature>
<feature type="binding site" evidence="1">
    <location>
        <begin position="50"/>
        <end position="57"/>
    </location>
    <ligand>
        <name>ATP</name>
        <dbReference type="ChEBI" id="CHEBI:30616"/>
    </ligand>
</feature>
<keyword id="KW-0067">ATP-binding</keyword>
<keyword id="KW-0997">Cell inner membrane</keyword>
<keyword id="KW-1003">Cell membrane</keyword>
<keyword id="KW-0472">Membrane</keyword>
<keyword id="KW-0547">Nucleotide-binding</keyword>
<keyword id="KW-1278">Translocase</keyword>
<keyword id="KW-0813">Transport</keyword>
<sequence>MLGKTQADQGAAVIRAERLGKTYAEGKMRTPVFDGLDLSVATGETVAIVGASGAGKSTLLHLLGGLDIPTSGEVYVAGRRMSALSDGERGKLRNRSLGFVYQFHHLLPEFTALENVMMPVLLSGQDVSIARGQALQLLESVGLGHRVEHKPSELSGGERQRCAVARALVNKPGCVLGDEPTGNLDDKTAGTVFELMLELNRAQRTSLVLVTHDRSLARRLDRVLELHQGKLRELAPSAV</sequence>